<sequence length="185" mass="20843">MGYPGKNHKSYQTPKRPFEKTRIEEETRLVIEYGLRNKREVWKAQSHLRKYRKAARELLALMSSATNQTVFEAKKSELISHMQRAGLLGPDADIDNVLALKVPAQLERRLQTLVYRKGLARSPKQARQLVTHGHIAIGGRRVTVPGYLVTRGEETTISYAGKSPFVDASHAERTRITRPTGAGVN</sequence>
<organism>
    <name type="scientific">Methanoregula boonei (strain DSM 21154 / JCM 14090 / 6A8)</name>
    <dbReference type="NCBI Taxonomy" id="456442"/>
    <lineage>
        <taxon>Archaea</taxon>
        <taxon>Methanobacteriati</taxon>
        <taxon>Methanobacteriota</taxon>
        <taxon>Stenosarchaea group</taxon>
        <taxon>Methanomicrobia</taxon>
        <taxon>Methanomicrobiales</taxon>
        <taxon>Methanoregulaceae</taxon>
        <taxon>Methanoregula</taxon>
    </lineage>
</organism>
<feature type="chain" id="PRO_0000322361" description="Small ribosomal subunit protein uS4">
    <location>
        <begin position="1"/>
        <end position="185"/>
    </location>
</feature>
<feature type="domain" description="S4 RNA-binding" evidence="1">
    <location>
        <begin position="108"/>
        <end position="170"/>
    </location>
</feature>
<gene>
    <name evidence="1" type="primary">rps4</name>
    <name type="ordered locus">Mboo_2224</name>
</gene>
<proteinExistence type="inferred from homology"/>
<keyword id="KW-1185">Reference proteome</keyword>
<keyword id="KW-0687">Ribonucleoprotein</keyword>
<keyword id="KW-0689">Ribosomal protein</keyword>
<keyword id="KW-0694">RNA-binding</keyword>
<keyword id="KW-0699">rRNA-binding</keyword>
<protein>
    <recommendedName>
        <fullName evidence="1">Small ribosomal subunit protein uS4</fullName>
    </recommendedName>
    <alternativeName>
        <fullName evidence="2">30S ribosomal protein S4</fullName>
    </alternativeName>
</protein>
<name>RS4_METB6</name>
<dbReference type="EMBL" id="CP000780">
    <property type="protein sequence ID" value="ABS56738.1"/>
    <property type="molecule type" value="Genomic_DNA"/>
</dbReference>
<dbReference type="RefSeq" id="WP_012107798.1">
    <property type="nucleotide sequence ID" value="NC_009712.1"/>
</dbReference>
<dbReference type="SMR" id="A7IAH7"/>
<dbReference type="STRING" id="456442.Mboo_2224"/>
<dbReference type="GeneID" id="5410159"/>
<dbReference type="KEGG" id="mbn:Mboo_2224"/>
<dbReference type="eggNOG" id="arCOG04239">
    <property type="taxonomic scope" value="Archaea"/>
</dbReference>
<dbReference type="HOGENOM" id="CLU_089738_1_1_2"/>
<dbReference type="OrthoDB" id="10429at2157"/>
<dbReference type="Proteomes" id="UP000002408">
    <property type="component" value="Chromosome"/>
</dbReference>
<dbReference type="GO" id="GO:0015935">
    <property type="term" value="C:small ribosomal subunit"/>
    <property type="evidence" value="ECO:0007669"/>
    <property type="project" value="InterPro"/>
</dbReference>
<dbReference type="GO" id="GO:0019843">
    <property type="term" value="F:rRNA binding"/>
    <property type="evidence" value="ECO:0007669"/>
    <property type="project" value="UniProtKB-UniRule"/>
</dbReference>
<dbReference type="GO" id="GO:0003735">
    <property type="term" value="F:structural constituent of ribosome"/>
    <property type="evidence" value="ECO:0007669"/>
    <property type="project" value="InterPro"/>
</dbReference>
<dbReference type="GO" id="GO:0042274">
    <property type="term" value="P:ribosomal small subunit biogenesis"/>
    <property type="evidence" value="ECO:0007669"/>
    <property type="project" value="TreeGrafter"/>
</dbReference>
<dbReference type="GO" id="GO:0006412">
    <property type="term" value="P:translation"/>
    <property type="evidence" value="ECO:0007669"/>
    <property type="project" value="UniProtKB-UniRule"/>
</dbReference>
<dbReference type="CDD" id="cd00165">
    <property type="entry name" value="S4"/>
    <property type="match status" value="1"/>
</dbReference>
<dbReference type="Gene3D" id="3.10.290.10">
    <property type="entry name" value="RNA-binding S4 domain"/>
    <property type="match status" value="1"/>
</dbReference>
<dbReference type="HAMAP" id="MF_01306_A">
    <property type="entry name" value="Ribosomal_uS4_A"/>
    <property type="match status" value="1"/>
</dbReference>
<dbReference type="InterPro" id="IPR022801">
    <property type="entry name" value="Ribosomal_uS4"/>
</dbReference>
<dbReference type="InterPro" id="IPR022802">
    <property type="entry name" value="Ribosomal_uS4_arc"/>
</dbReference>
<dbReference type="InterPro" id="IPR018079">
    <property type="entry name" value="Ribosomal_uS4_CS"/>
</dbReference>
<dbReference type="InterPro" id="IPR005710">
    <property type="entry name" value="Ribosomal_uS4_euk/arc"/>
</dbReference>
<dbReference type="InterPro" id="IPR001912">
    <property type="entry name" value="Ribosomal_uS4_N"/>
</dbReference>
<dbReference type="InterPro" id="IPR002942">
    <property type="entry name" value="S4_RNA-bd"/>
</dbReference>
<dbReference type="InterPro" id="IPR036986">
    <property type="entry name" value="S4_RNA-bd_sf"/>
</dbReference>
<dbReference type="NCBIfam" id="NF003139">
    <property type="entry name" value="PRK04051.1"/>
    <property type="match status" value="1"/>
</dbReference>
<dbReference type="NCBIfam" id="TIGR01018">
    <property type="entry name" value="uS4_arch"/>
    <property type="match status" value="1"/>
</dbReference>
<dbReference type="PANTHER" id="PTHR11831">
    <property type="entry name" value="30S 40S RIBOSOMAL PROTEIN"/>
    <property type="match status" value="1"/>
</dbReference>
<dbReference type="PANTHER" id="PTHR11831:SF5">
    <property type="entry name" value="40S RIBOSOMAL PROTEIN S9"/>
    <property type="match status" value="1"/>
</dbReference>
<dbReference type="Pfam" id="PF01479">
    <property type="entry name" value="S4"/>
    <property type="match status" value="1"/>
</dbReference>
<dbReference type="SMART" id="SM01390">
    <property type="entry name" value="Ribosomal_S4"/>
    <property type="match status" value="1"/>
</dbReference>
<dbReference type="SMART" id="SM00363">
    <property type="entry name" value="S4"/>
    <property type="match status" value="1"/>
</dbReference>
<dbReference type="SUPFAM" id="SSF55174">
    <property type="entry name" value="Alpha-L RNA-binding motif"/>
    <property type="match status" value="1"/>
</dbReference>
<dbReference type="PROSITE" id="PS00632">
    <property type="entry name" value="RIBOSOMAL_S4"/>
    <property type="match status" value="1"/>
</dbReference>
<dbReference type="PROSITE" id="PS50889">
    <property type="entry name" value="S4"/>
    <property type="match status" value="1"/>
</dbReference>
<accession>A7IAH7</accession>
<comment type="function">
    <text evidence="1">One of the primary rRNA binding proteins, it binds directly to 16S rRNA where it nucleates assembly of the body of the 30S subunit.</text>
</comment>
<comment type="function">
    <text evidence="1">With S5 and S12 plays an important role in translational accuracy.</text>
</comment>
<comment type="subunit">
    <text evidence="1">Part of the 30S ribosomal subunit. Contacts protein S5. The interaction surface between S4 and S5 is involved in control of translational fidelity.</text>
</comment>
<comment type="similarity">
    <text evidence="1">Belongs to the universal ribosomal protein uS4 family.</text>
</comment>
<evidence type="ECO:0000255" key="1">
    <source>
        <dbReference type="HAMAP-Rule" id="MF_01306"/>
    </source>
</evidence>
<evidence type="ECO:0000305" key="2"/>
<reference key="1">
    <citation type="journal article" date="2015" name="Microbiology">
        <title>Genome of Methanoregula boonei 6A8 reveals adaptations to oligotrophic peatland environments.</title>
        <authorList>
            <person name="Braeuer S."/>
            <person name="Cadillo-Quiroz H."/>
            <person name="Kyrpides N."/>
            <person name="Woyke T."/>
            <person name="Goodwin L."/>
            <person name="Detter C."/>
            <person name="Podell S."/>
            <person name="Yavitt J.B."/>
            <person name="Zinder S.H."/>
        </authorList>
    </citation>
    <scope>NUCLEOTIDE SEQUENCE [LARGE SCALE GENOMIC DNA]</scope>
    <source>
        <strain>DSM 21154 / JCM 14090 / 6A8</strain>
    </source>
</reference>